<organism>
    <name type="scientific">Danio rerio</name>
    <name type="common">Zebrafish</name>
    <name type="synonym">Brachydanio rerio</name>
    <dbReference type="NCBI Taxonomy" id="7955"/>
    <lineage>
        <taxon>Eukaryota</taxon>
        <taxon>Metazoa</taxon>
        <taxon>Chordata</taxon>
        <taxon>Craniata</taxon>
        <taxon>Vertebrata</taxon>
        <taxon>Euteleostomi</taxon>
        <taxon>Actinopterygii</taxon>
        <taxon>Neopterygii</taxon>
        <taxon>Teleostei</taxon>
        <taxon>Ostariophysi</taxon>
        <taxon>Cypriniformes</taxon>
        <taxon>Danionidae</taxon>
        <taxon>Danioninae</taxon>
        <taxon>Danio</taxon>
    </lineage>
</organism>
<feature type="chain" id="PRO_0000344207" description="Protein FEV">
    <location>
        <begin position="1"/>
        <end position="235"/>
    </location>
</feature>
<feature type="DNA-binding region" description="ETS" evidence="2">
    <location>
        <begin position="58"/>
        <end position="138"/>
    </location>
</feature>
<name>FEV_DANRE</name>
<gene>
    <name type="primary">fev</name>
    <name type="synonym">pet1</name>
    <name type="ORF">zgc:158720</name>
</gene>
<proteinExistence type="evidence at transcript level"/>
<keyword id="KW-0217">Developmental protein</keyword>
<keyword id="KW-0221">Differentiation</keyword>
<keyword id="KW-0238">DNA-binding</keyword>
<keyword id="KW-0524">Neurogenesis</keyword>
<keyword id="KW-0539">Nucleus</keyword>
<keyword id="KW-1185">Reference proteome</keyword>
<keyword id="KW-0804">Transcription</keyword>
<keyword id="KW-0805">Transcription regulation</keyword>
<dbReference type="EMBL" id="EF370169">
    <property type="protein sequence ID" value="ABN42912.1"/>
    <property type="molecule type" value="mRNA"/>
</dbReference>
<dbReference type="RefSeq" id="NP_001315078.1">
    <property type="nucleotide sequence ID" value="NM_001328149.1"/>
</dbReference>
<dbReference type="RefSeq" id="XP_005167545.1">
    <property type="nucleotide sequence ID" value="XM_005167488.3"/>
</dbReference>
<dbReference type="SMR" id="A3FEM2"/>
<dbReference type="FunCoup" id="A3FEM2">
    <property type="interactions" value="458"/>
</dbReference>
<dbReference type="STRING" id="7955.ENSDARP00000087775"/>
<dbReference type="PaxDb" id="7955-ENSDARP00000087775"/>
<dbReference type="Ensembl" id="ENSDART00000093343">
    <property type="protein sequence ID" value="ENSDARP00000087775"/>
    <property type="gene ID" value="ENSDARG00000009242"/>
</dbReference>
<dbReference type="GeneID" id="791175"/>
<dbReference type="KEGG" id="dre:791175"/>
<dbReference type="AGR" id="ZFIN:ZDB-GENE-070112-1852"/>
<dbReference type="CTD" id="54738"/>
<dbReference type="ZFIN" id="ZDB-GENE-070112-1852">
    <property type="gene designation" value="fev"/>
</dbReference>
<dbReference type="eggNOG" id="KOG3806">
    <property type="taxonomic scope" value="Eukaryota"/>
</dbReference>
<dbReference type="InParanoid" id="A3FEM2"/>
<dbReference type="OMA" id="GFSYWAG"/>
<dbReference type="OrthoDB" id="10067219at2759"/>
<dbReference type="PhylomeDB" id="A3FEM2"/>
<dbReference type="TreeFam" id="TF316214"/>
<dbReference type="PRO" id="PR:A3FEM2"/>
<dbReference type="Proteomes" id="UP000000437">
    <property type="component" value="Chromosome 9"/>
</dbReference>
<dbReference type="Bgee" id="ENSDARG00000009242">
    <property type="expression patterns" value="Expressed in intestine and 25 other cell types or tissues"/>
</dbReference>
<dbReference type="ExpressionAtlas" id="A3FEM2">
    <property type="expression patterns" value="baseline"/>
</dbReference>
<dbReference type="GO" id="GO:0005634">
    <property type="term" value="C:nucleus"/>
    <property type="evidence" value="ECO:0000318"/>
    <property type="project" value="GO_Central"/>
</dbReference>
<dbReference type="GO" id="GO:0000981">
    <property type="term" value="F:DNA-binding transcription factor activity, RNA polymerase II-specific"/>
    <property type="evidence" value="ECO:0000318"/>
    <property type="project" value="GO_Central"/>
</dbReference>
<dbReference type="GO" id="GO:0000976">
    <property type="term" value="F:transcription cis-regulatory region binding"/>
    <property type="evidence" value="ECO:0000314"/>
    <property type="project" value="ZFIN"/>
</dbReference>
<dbReference type="GO" id="GO:0030154">
    <property type="term" value="P:cell differentiation"/>
    <property type="evidence" value="ECO:0000318"/>
    <property type="project" value="GO_Central"/>
</dbReference>
<dbReference type="GO" id="GO:0060218">
    <property type="term" value="P:hematopoietic stem cell differentiation"/>
    <property type="evidence" value="ECO:0000315"/>
    <property type="project" value="ZFIN"/>
</dbReference>
<dbReference type="GO" id="GO:0007399">
    <property type="term" value="P:nervous system development"/>
    <property type="evidence" value="ECO:0007669"/>
    <property type="project" value="UniProtKB-KW"/>
</dbReference>
<dbReference type="GO" id="GO:0006355">
    <property type="term" value="P:regulation of DNA-templated transcription"/>
    <property type="evidence" value="ECO:0000314"/>
    <property type="project" value="ZFIN"/>
</dbReference>
<dbReference type="GO" id="GO:0006357">
    <property type="term" value="P:regulation of transcription by RNA polymerase II"/>
    <property type="evidence" value="ECO:0000318"/>
    <property type="project" value="GO_Central"/>
</dbReference>
<dbReference type="FunFam" id="1.10.10.10:FF:000448">
    <property type="entry name" value="FEV (ETS oncogene family)"/>
    <property type="match status" value="1"/>
</dbReference>
<dbReference type="Gene3D" id="1.10.10.10">
    <property type="entry name" value="Winged helix-like DNA-binding domain superfamily/Winged helix DNA-binding domain"/>
    <property type="match status" value="1"/>
</dbReference>
<dbReference type="InterPro" id="IPR000418">
    <property type="entry name" value="Ets_dom"/>
</dbReference>
<dbReference type="InterPro" id="IPR046328">
    <property type="entry name" value="ETS_fam"/>
</dbReference>
<dbReference type="InterPro" id="IPR036388">
    <property type="entry name" value="WH-like_DNA-bd_sf"/>
</dbReference>
<dbReference type="InterPro" id="IPR036390">
    <property type="entry name" value="WH_DNA-bd_sf"/>
</dbReference>
<dbReference type="PANTHER" id="PTHR11849">
    <property type="entry name" value="ETS"/>
    <property type="match status" value="1"/>
</dbReference>
<dbReference type="PANTHER" id="PTHR11849:SF307">
    <property type="entry name" value="FEV TRANSCRIPTION FACTOR, ETS FAMILY MEMBER"/>
    <property type="match status" value="1"/>
</dbReference>
<dbReference type="Pfam" id="PF00178">
    <property type="entry name" value="Ets"/>
    <property type="match status" value="1"/>
</dbReference>
<dbReference type="PRINTS" id="PR00454">
    <property type="entry name" value="ETSDOMAIN"/>
</dbReference>
<dbReference type="SMART" id="SM00413">
    <property type="entry name" value="ETS"/>
    <property type="match status" value="1"/>
</dbReference>
<dbReference type="SUPFAM" id="SSF46785">
    <property type="entry name" value="Winged helix' DNA-binding domain"/>
    <property type="match status" value="1"/>
</dbReference>
<dbReference type="PROSITE" id="PS00345">
    <property type="entry name" value="ETS_DOMAIN_1"/>
    <property type="match status" value="1"/>
</dbReference>
<dbReference type="PROSITE" id="PS00346">
    <property type="entry name" value="ETS_DOMAIN_2"/>
    <property type="match status" value="1"/>
</dbReference>
<dbReference type="PROSITE" id="PS50061">
    <property type="entry name" value="ETS_DOMAIN_3"/>
    <property type="match status" value="1"/>
</dbReference>
<accession>A3FEM2</accession>
<reference key="1">
    <citation type="journal article" date="2007" name="Dev. Dyn.">
        <title>The serotonergic phenotype is acquired by converging genetic mechanisms within the zebrafish central nervous system.</title>
        <authorList>
            <person name="Lillesaar C."/>
            <person name="Tannhaeuser B."/>
            <person name="Stigloher C."/>
            <person name="Kremmer E."/>
            <person name="Bally-Cuif L."/>
        </authorList>
    </citation>
    <scope>NUCLEOTIDE SEQUENCE [MRNA]</scope>
    <scope>DEVELOPMENTAL STAGE</scope>
    <scope>TISSUE SPECIFICITY</scope>
</reference>
<evidence type="ECO:0000250" key="1"/>
<evidence type="ECO:0000255" key="2">
    <source>
        <dbReference type="PROSITE-ProRule" id="PRU00237"/>
    </source>
</evidence>
<evidence type="ECO:0000269" key="3">
    <source>
    </source>
</evidence>
<evidence type="ECO:0000305" key="4"/>
<protein>
    <recommendedName>
        <fullName>Protein FEV</fullName>
    </recommendedName>
    <alternativeName>
        <fullName>Protein Pet-1</fullName>
    </alternativeName>
</protein>
<comment type="function">
    <text evidence="1">Functions as a transcriptional regulator. Functions in the differentiation and the maintenance of the central serotonergic neurons. May play a role in cell growth (By similarity).</text>
</comment>
<comment type="subcellular location">
    <subcellularLocation>
        <location evidence="2">Nucleus</location>
    </subcellularLocation>
</comment>
<comment type="tissue specificity">
    <text evidence="3">Expressed by serotonergic neurons in anterior and posterior raphe.</text>
</comment>
<comment type="developmental stage">
    <text evidence="3">Expressed in post-mitotic raphe serotonergic neurons. First detected at the 20 somites stage.</text>
</comment>
<comment type="similarity">
    <text evidence="4">Belongs to the ETS family.</text>
</comment>
<comment type="caution">
    <text evidence="4">It is uncertain whether Met-1 or Met-14 is the initiator.</text>
</comment>
<sequence length="235" mass="26343">MKAYPFTSTTATTMRQNCGGSLMFNMYLSDPTENLLKESKSPSWTPINTGVQKGSGQIQLWQFLLELLSDSANMTCIAWEGTNGEFKLIDPDEVARRWGERKSKPNMNYDKLSRALRYYYDKNIMTKVHGKRYAYKFDFNGLAQVCQPSSTEQAIYKFQSNFAPIQFSGISKLNLVAPGVGPSGFSYWPGSPPTLYHSHNLQPPGPFGAVSASHLSCVNNINSLNNLNNINNHYN</sequence>